<evidence type="ECO:0000255" key="1">
    <source>
        <dbReference type="HAMAP-Rule" id="MF_00141"/>
    </source>
</evidence>
<feature type="chain" id="PRO_1000096135" description="Elongation factor P">
    <location>
        <begin position="1"/>
        <end position="188"/>
    </location>
</feature>
<proteinExistence type="inferred from homology"/>
<reference key="1">
    <citation type="submission" date="2008-06" db="EMBL/GenBank/DDBJ databases">
        <title>Complete sequence of Chlorobaculum parvum NCIB 8327.</title>
        <authorList>
            <consortium name="US DOE Joint Genome Institute"/>
            <person name="Lucas S."/>
            <person name="Copeland A."/>
            <person name="Lapidus A."/>
            <person name="Glavina del Rio T."/>
            <person name="Dalin E."/>
            <person name="Tice H."/>
            <person name="Bruce D."/>
            <person name="Goodwin L."/>
            <person name="Pitluck S."/>
            <person name="Schmutz J."/>
            <person name="Larimer F."/>
            <person name="Land M."/>
            <person name="Hauser L."/>
            <person name="Kyrpides N."/>
            <person name="Mikhailova N."/>
            <person name="Zhao F."/>
            <person name="Li T."/>
            <person name="Liu Z."/>
            <person name="Overmann J."/>
            <person name="Bryant D.A."/>
            <person name="Richardson P."/>
        </authorList>
    </citation>
    <scope>NUCLEOTIDE SEQUENCE [LARGE SCALE GENOMIC DNA]</scope>
    <source>
        <strain>DSM 263 / NCIMB 8327</strain>
    </source>
</reference>
<keyword id="KW-0963">Cytoplasm</keyword>
<keyword id="KW-0251">Elongation factor</keyword>
<keyword id="KW-0648">Protein biosynthesis</keyword>
<name>EFP_CHLP8</name>
<gene>
    <name evidence="1" type="primary">efp</name>
    <name type="ordered locus">Cpar_1879</name>
</gene>
<protein>
    <recommendedName>
        <fullName evidence="1">Elongation factor P</fullName>
        <shortName evidence="1">EF-P</shortName>
    </recommendedName>
</protein>
<dbReference type="EMBL" id="CP001099">
    <property type="protein sequence ID" value="ACF12271.1"/>
    <property type="molecule type" value="Genomic_DNA"/>
</dbReference>
<dbReference type="RefSeq" id="WP_012503104.1">
    <property type="nucleotide sequence ID" value="NC_011027.1"/>
</dbReference>
<dbReference type="SMR" id="B3QQR8"/>
<dbReference type="STRING" id="517417.Cpar_1879"/>
<dbReference type="KEGG" id="cpc:Cpar_1879"/>
<dbReference type="eggNOG" id="COG0231">
    <property type="taxonomic scope" value="Bacteria"/>
</dbReference>
<dbReference type="HOGENOM" id="CLU_074944_0_1_10"/>
<dbReference type="OrthoDB" id="9801844at2"/>
<dbReference type="UniPathway" id="UPA00345"/>
<dbReference type="Proteomes" id="UP000008811">
    <property type="component" value="Chromosome"/>
</dbReference>
<dbReference type="GO" id="GO:0005737">
    <property type="term" value="C:cytoplasm"/>
    <property type="evidence" value="ECO:0007669"/>
    <property type="project" value="UniProtKB-SubCell"/>
</dbReference>
<dbReference type="GO" id="GO:0003746">
    <property type="term" value="F:translation elongation factor activity"/>
    <property type="evidence" value="ECO:0007669"/>
    <property type="project" value="UniProtKB-UniRule"/>
</dbReference>
<dbReference type="GO" id="GO:0043043">
    <property type="term" value="P:peptide biosynthetic process"/>
    <property type="evidence" value="ECO:0007669"/>
    <property type="project" value="InterPro"/>
</dbReference>
<dbReference type="CDD" id="cd04470">
    <property type="entry name" value="S1_EF-P_repeat_1"/>
    <property type="match status" value="1"/>
</dbReference>
<dbReference type="CDD" id="cd05794">
    <property type="entry name" value="S1_EF-P_repeat_2"/>
    <property type="match status" value="1"/>
</dbReference>
<dbReference type="FunFam" id="2.40.50.140:FF:000004">
    <property type="entry name" value="Elongation factor P"/>
    <property type="match status" value="1"/>
</dbReference>
<dbReference type="FunFam" id="2.40.50.140:FF:000009">
    <property type="entry name" value="Elongation factor P"/>
    <property type="match status" value="1"/>
</dbReference>
<dbReference type="Gene3D" id="2.30.30.30">
    <property type="match status" value="1"/>
</dbReference>
<dbReference type="Gene3D" id="2.40.50.140">
    <property type="entry name" value="Nucleic acid-binding proteins"/>
    <property type="match status" value="2"/>
</dbReference>
<dbReference type="HAMAP" id="MF_00141">
    <property type="entry name" value="EF_P"/>
    <property type="match status" value="1"/>
</dbReference>
<dbReference type="InterPro" id="IPR015365">
    <property type="entry name" value="Elong-fact-P_C"/>
</dbReference>
<dbReference type="InterPro" id="IPR012340">
    <property type="entry name" value="NA-bd_OB-fold"/>
</dbReference>
<dbReference type="InterPro" id="IPR014722">
    <property type="entry name" value="Rib_uL2_dom2"/>
</dbReference>
<dbReference type="InterPro" id="IPR020599">
    <property type="entry name" value="Transl_elong_fac_P/YeiP"/>
</dbReference>
<dbReference type="InterPro" id="IPR013185">
    <property type="entry name" value="Transl_elong_KOW-like"/>
</dbReference>
<dbReference type="InterPro" id="IPR001059">
    <property type="entry name" value="Transl_elong_P/YeiP_cen"/>
</dbReference>
<dbReference type="InterPro" id="IPR013852">
    <property type="entry name" value="Transl_elong_P/YeiP_CS"/>
</dbReference>
<dbReference type="InterPro" id="IPR011768">
    <property type="entry name" value="Transl_elongation_fac_P"/>
</dbReference>
<dbReference type="InterPro" id="IPR008991">
    <property type="entry name" value="Translation_prot_SH3-like_sf"/>
</dbReference>
<dbReference type="NCBIfam" id="TIGR00038">
    <property type="entry name" value="efp"/>
    <property type="match status" value="1"/>
</dbReference>
<dbReference type="NCBIfam" id="NF001810">
    <property type="entry name" value="PRK00529.1"/>
    <property type="match status" value="1"/>
</dbReference>
<dbReference type="PANTHER" id="PTHR30053">
    <property type="entry name" value="ELONGATION FACTOR P"/>
    <property type="match status" value="1"/>
</dbReference>
<dbReference type="PANTHER" id="PTHR30053:SF12">
    <property type="entry name" value="ELONGATION FACTOR P (EF-P) FAMILY PROTEIN"/>
    <property type="match status" value="1"/>
</dbReference>
<dbReference type="Pfam" id="PF01132">
    <property type="entry name" value="EFP"/>
    <property type="match status" value="1"/>
</dbReference>
<dbReference type="Pfam" id="PF08207">
    <property type="entry name" value="EFP_N"/>
    <property type="match status" value="1"/>
</dbReference>
<dbReference type="Pfam" id="PF09285">
    <property type="entry name" value="Elong-fact-P_C"/>
    <property type="match status" value="1"/>
</dbReference>
<dbReference type="PIRSF" id="PIRSF005901">
    <property type="entry name" value="EF-P"/>
    <property type="match status" value="1"/>
</dbReference>
<dbReference type="SMART" id="SM01185">
    <property type="entry name" value="EFP"/>
    <property type="match status" value="1"/>
</dbReference>
<dbReference type="SMART" id="SM00841">
    <property type="entry name" value="Elong-fact-P_C"/>
    <property type="match status" value="1"/>
</dbReference>
<dbReference type="SUPFAM" id="SSF50249">
    <property type="entry name" value="Nucleic acid-binding proteins"/>
    <property type="match status" value="2"/>
</dbReference>
<dbReference type="SUPFAM" id="SSF50104">
    <property type="entry name" value="Translation proteins SH3-like domain"/>
    <property type="match status" value="1"/>
</dbReference>
<dbReference type="PROSITE" id="PS01275">
    <property type="entry name" value="EFP"/>
    <property type="match status" value="1"/>
</dbReference>
<accession>B3QQR8</accession>
<comment type="function">
    <text evidence="1">Involved in peptide bond synthesis. Stimulates efficient translation and peptide-bond synthesis on native or reconstituted 70S ribosomes in vitro. Probably functions indirectly by altering the affinity of the ribosome for aminoacyl-tRNA, thus increasing their reactivity as acceptors for peptidyl transferase.</text>
</comment>
<comment type="pathway">
    <text evidence="1">Protein biosynthesis; polypeptide chain elongation.</text>
</comment>
<comment type="subcellular location">
    <subcellularLocation>
        <location evidence="1">Cytoplasm</location>
    </subcellularLocation>
</comment>
<comment type="similarity">
    <text evidence="1">Belongs to the elongation factor P family.</text>
</comment>
<organism>
    <name type="scientific">Chlorobaculum parvum (strain DSM 263 / NCIMB 8327)</name>
    <name type="common">Chlorobium vibrioforme subsp. thiosulfatophilum</name>
    <dbReference type="NCBI Taxonomy" id="517417"/>
    <lineage>
        <taxon>Bacteria</taxon>
        <taxon>Pseudomonadati</taxon>
        <taxon>Chlorobiota</taxon>
        <taxon>Chlorobiia</taxon>
        <taxon>Chlorobiales</taxon>
        <taxon>Chlorobiaceae</taxon>
        <taxon>Chlorobaculum</taxon>
    </lineage>
</organism>
<sequence>MVSISNVSKGAIIRWKGEPHSIESLVHRTPGNLRAFYQASMKNLKTGRNVEYRFSATEQVDVIVTERKKYQYLYRDGEDYVMMDTETFDQINVPEVAIGSASRFIKDAVMVDIVFADDGSILEVELPTFVELEVTETNPASKDDRATSGTKPAIVETGAEVNVPMFIQTGSIIRIDTRSGEYMDRVKK</sequence>